<organism>
    <name type="scientific">Homo sapiens</name>
    <name type="common">Human</name>
    <dbReference type="NCBI Taxonomy" id="9606"/>
    <lineage>
        <taxon>Eukaryota</taxon>
        <taxon>Metazoa</taxon>
        <taxon>Chordata</taxon>
        <taxon>Craniata</taxon>
        <taxon>Vertebrata</taxon>
        <taxon>Euteleostomi</taxon>
        <taxon>Mammalia</taxon>
        <taxon>Eutheria</taxon>
        <taxon>Euarchontoglires</taxon>
        <taxon>Primates</taxon>
        <taxon>Haplorrhini</taxon>
        <taxon>Catarrhini</taxon>
        <taxon>Hominidae</taxon>
        <taxon>Homo</taxon>
    </lineage>
</organism>
<keyword id="KW-0002">3D-structure</keyword>
<keyword id="KW-0025">Alternative splicing</keyword>
<keyword id="KW-1003">Cell membrane</keyword>
<keyword id="KW-0160">Chromosomal rearrangement</keyword>
<keyword id="KW-0225">Disease variant</keyword>
<keyword id="KW-1015">Disulfide bond</keyword>
<keyword id="KW-0325">Glycoprotein</keyword>
<keyword id="KW-0472">Membrane</keyword>
<keyword id="KW-0597">Phosphoprotein</keyword>
<keyword id="KW-1267">Proteomics identification</keyword>
<keyword id="KW-0675">Receptor</keyword>
<keyword id="KW-1185">Reference proteome</keyword>
<keyword id="KW-0677">Repeat</keyword>
<keyword id="KW-0964">Secreted</keyword>
<keyword id="KW-0732">Signal</keyword>
<keyword id="KW-0812">Transmembrane</keyword>
<keyword id="KW-1133">Transmembrane helix</keyword>
<accession>P42702</accession>
<accession>Q6LCD9</accession>
<reference key="1">
    <citation type="journal article" date="1991" name="EMBO J.">
        <title>Leukemia inhibitory factor receptor is structurally related to the IL-6 signal transducer, gp130.</title>
        <authorList>
            <person name="Gearing D.P."/>
            <person name="Thut C.J."/>
            <person name="Vanden Bos T."/>
            <person name="Gimpel S.D."/>
            <person name="Delaney P.B."/>
            <person name="King J."/>
            <person name="Price V."/>
            <person name="Cosman D."/>
            <person name="Beckmann M.P."/>
        </authorList>
    </citation>
    <scope>NUCLEOTIDE SEQUENCE [MRNA] (ISOFORM 1)</scope>
    <source>
        <tissue>Placenta</tissue>
    </source>
</reference>
<reference key="2">
    <citation type="submission" date="1996-08" db="EMBL/GenBank/DDBJ databases">
        <title>Human LIF receptor 3' non-coding region.</title>
        <authorList>
            <person name="Wang Z."/>
            <person name="Melmed S."/>
        </authorList>
    </citation>
    <scope>NUCLEOTIDE SEQUENCE [MRNA] OF 942-1097</scope>
</reference>
<reference key="3">
    <citation type="journal article" date="1998" name="Oncogene">
        <title>The recurrent translocation t(5;8)(p13;q12) in pleomorphic adenomas results in upregulation of PLAG1 gene expression under control of the LIFR promoter.</title>
        <authorList>
            <person name="Voz M.L."/>
            <person name="Astrom A.-K."/>
            <person name="Kas K."/>
            <person name="Mark J."/>
            <person name="Stenman G."/>
            <person name="Van de Ven W.J.M."/>
        </authorList>
    </citation>
    <scope>CHROMOSOMAL TRANSLOCATION WITH PLAG1</scope>
</reference>
<reference key="4">
    <citation type="journal article" date="2008" name="Proc. Natl. Acad. Sci. U.S.A.">
        <title>A quantitative atlas of mitotic phosphorylation.</title>
        <authorList>
            <person name="Dephoure N."/>
            <person name="Zhou C."/>
            <person name="Villen J."/>
            <person name="Beausoleil S.A."/>
            <person name="Bakalarski C.E."/>
            <person name="Elledge S.J."/>
            <person name="Gygi S.P."/>
        </authorList>
    </citation>
    <scope>PHOSPHORYLATION [LARGE SCALE ANALYSIS] AT SER-927</scope>
    <scope>IDENTIFICATION BY MASS SPECTROMETRY [LARGE SCALE ANALYSIS]</scope>
    <source>
        <tissue>Cervix carcinoma</tissue>
    </source>
</reference>
<reference key="5">
    <citation type="journal article" date="2008" name="Mol. Cell">
        <title>Structural organization of a full-length gp130/LIF-R cytokine receptor transmembrane complex.</title>
        <authorList>
            <person name="Skiniotis G."/>
            <person name="Lupardus P.J."/>
            <person name="Martick M."/>
            <person name="Walz T."/>
            <person name="Garcia K.C."/>
        </authorList>
    </citation>
    <scope>X-RAY CRYSTALLOGRAPHY (3.1 ANGSTROMS) OF 52-534</scope>
    <scope>IDENTIFICATION IN A COMPLEX WITH IL6ST; CNTF AND CNTFR</scope>
    <scope>GLYCOSYLATION AT ASN-131; ASN-303; ASN-407 AND ASN-426</scope>
    <scope>DISULFIDE BONDS</scope>
    <scope>ELECTRON MICROSCOPY</scope>
    <scope>SUBUNIT</scope>
</reference>
<reference key="6">
    <citation type="journal article" date="2004" name="Am. J. Hum. Genet.">
        <title>Null leukemia inhibitory factor receptor (LIFR) mutations in Stueve-Wiedemann/Schwartz-Jampel type 2 syndrome.</title>
        <authorList>
            <person name="Dagoneau N."/>
            <person name="Scheffer D."/>
            <person name="Huber C."/>
            <person name="Al-Gazali L.I."/>
            <person name="Di Rocco M."/>
            <person name="Godard A."/>
            <person name="Martinovic J."/>
            <person name="Raas-Rothschild A."/>
            <person name="Sigaudy S."/>
            <person name="Unger S."/>
            <person name="Nicole S."/>
            <person name="Fontaine B."/>
            <person name="Taupin J.-L."/>
            <person name="Moreau J.-F."/>
            <person name="Superti-Furga A."/>
            <person name="Le Merrer M."/>
            <person name="Bonaventure J."/>
            <person name="Munnich A."/>
            <person name="Legeai-Mallet L."/>
            <person name="Cormier-Daire V."/>
        </authorList>
    </citation>
    <scope>VARIANT STWS1 PRO-279</scope>
</reference>
<reference key="7">
    <citation type="journal article" date="2006" name="Science">
        <title>The consensus coding sequences of human breast and colorectal cancers.</title>
        <authorList>
            <person name="Sjoeblom T."/>
            <person name="Jones S."/>
            <person name="Wood L.D."/>
            <person name="Parsons D.W."/>
            <person name="Lin J."/>
            <person name="Barber T.D."/>
            <person name="Mandelker D."/>
            <person name="Leary R.J."/>
            <person name="Ptak J."/>
            <person name="Silliman N."/>
            <person name="Szabo S."/>
            <person name="Buckhaults P."/>
            <person name="Farrell C."/>
            <person name="Meeh P."/>
            <person name="Markowitz S.D."/>
            <person name="Willis J."/>
            <person name="Dawson D."/>
            <person name="Willson J.K.V."/>
            <person name="Gazdar A.F."/>
            <person name="Hartigan J."/>
            <person name="Wu L."/>
            <person name="Liu C."/>
            <person name="Parmigiani G."/>
            <person name="Park B.H."/>
            <person name="Bachman K.E."/>
            <person name="Papadopoulos N."/>
            <person name="Vogelstein B."/>
            <person name="Kinzler K.W."/>
            <person name="Velculescu V.E."/>
        </authorList>
    </citation>
    <scope>VARIANT [LARGE SCALE ANALYSIS] LEU-1068</scope>
</reference>
<sequence length="1097" mass="123743">MMDIYVCLKRPSWMVDNKRMRTASNFQWLLSTFILLYLMNQVNSQKKGAPHDLKCVTNNLQVWNCSWKAPSGTGRGTDYEVCIENRSRSCYQLEKTSIKIPALSHGDYEITINSLHDFGSSTSKFTLNEQNVSLIPDTPEILNLSADFSTSTLYLKWNDRGSVFPHRSNVIWEIKVLRKESMELVKLVTHNTTLNGKDTLHHWSWASDMPLECAIHFVEIRCYIDNLHFSGLEEWSDWSPVKNISWIPDSQTKVFPQDKVILVGSDITFCCVSQEKVLSALIGHTNCPLIHLDGENVAIKIRNISVSASSGTNVVFTTEDNIFGTVIFAGYPPDTPQQLNCETHDLKEIICSWNPGRVTALVGPRATSYTLVESFSGKYVRLKRAEAPTNESYQLLFQMLPNQEIYNFTLNAHNPLGRSQSTILVNITEKVYPHTPTSFKVKDINSTAVKLSWHLPGNFAKINFLCEIEIKKSNSVQEQRNVTIKGVENSSYLVALDKLNPYTLYTFRIRCSTETFWKWSKWSNKKQHLTTEASPSKGPDTWREWSSDGKNLIIYWKPLPINEANGKILSYNVSCSSDEETQSLSEIPDPQHKAEIRLDKNDYIISVVAKNSVGSSPPSKIASMEIPNDDLKIEQVVGMGKGILLTWHYDPNMTCDYVIKWCNSSRSEPCLMDWRKVPSNSTETVIESDEFRPGIRYNFFLYGCRNQGYQLLRSMIGYIEELAPIVAPNFTVEDTSADSILVKWEDIPVEELRGFLRGYLFYFGKGERDTSKMRVLESGRSDIKVKNITDISQKTLRIADLQGKTSYHLVLRAYTDGGVGPEKSMYVVTKENSVGLIIAILIPVAVAVIVGVVTSILCYRKREWIKETFYPDIPNPENCKALQFQKSVCEGSSALKTLEMNPCTPNNVEVLETRSAFPKIEDTEIISPVAERPEDRSDAEPENHVVVSYCPPIIEEEIPNPAADEAGGTAQVIYIDVQSMYQPQAKPEEEQENDPVGGAGYKPQMHLPINSTVEDIAAEEDLDKTAGYRPQANVNTWNLVSPDSPRSIDSNSEIVSFGSPCSINSRQFLIPPKDEDSPKSNGGGWSFTNFFQNKPND</sequence>
<evidence type="ECO:0000250" key="1">
    <source>
        <dbReference type="UniProtKB" id="P42703"/>
    </source>
</evidence>
<evidence type="ECO:0000255" key="2"/>
<evidence type="ECO:0000255" key="3">
    <source>
        <dbReference type="PROSITE-ProRule" id="PRU00316"/>
    </source>
</evidence>
<evidence type="ECO:0000256" key="4">
    <source>
        <dbReference type="SAM" id="MobiDB-lite"/>
    </source>
</evidence>
<evidence type="ECO:0000269" key="5">
    <source>
    </source>
</evidence>
<evidence type="ECO:0000269" key="6">
    <source>
    </source>
</evidence>
<evidence type="ECO:0000269" key="7">
    <source>
    </source>
</evidence>
<evidence type="ECO:0000305" key="8"/>
<evidence type="ECO:0007744" key="9">
    <source>
    </source>
</evidence>
<evidence type="ECO:0007829" key="10">
    <source>
        <dbReference type="PDB" id="3E0G"/>
    </source>
</evidence>
<evidence type="ECO:0007829" key="11">
    <source>
        <dbReference type="PDB" id="8D74"/>
    </source>
</evidence>
<protein>
    <recommendedName>
        <fullName>Leukemia inhibitory factor receptor</fullName>
        <shortName>LIF receptor</shortName>
        <shortName>LIF-R</shortName>
    </recommendedName>
    <cdAntigenName>CD118</cdAntigenName>
</protein>
<name>LIFR_HUMAN</name>
<feature type="signal peptide" evidence="2">
    <location>
        <begin position="1"/>
        <end position="44"/>
    </location>
</feature>
<feature type="chain" id="PRO_0000010902" description="Leukemia inhibitory factor receptor">
    <location>
        <begin position="45"/>
        <end position="1097"/>
    </location>
</feature>
<feature type="topological domain" description="Extracellular" evidence="2">
    <location>
        <begin position="45"/>
        <end position="833"/>
    </location>
</feature>
<feature type="transmembrane region" description="Helical" evidence="2">
    <location>
        <begin position="834"/>
        <end position="858"/>
    </location>
</feature>
<feature type="topological domain" description="Cytoplasmic" evidence="2">
    <location>
        <begin position="859"/>
        <end position="1097"/>
    </location>
</feature>
<feature type="domain" description="Fibronectin type-III 1" evidence="3">
    <location>
        <begin position="49"/>
        <end position="138"/>
    </location>
</feature>
<feature type="domain" description="Fibronectin type-III 2" evidence="3">
    <location>
        <begin position="335"/>
        <end position="434"/>
    </location>
</feature>
<feature type="domain" description="Fibronectin type-III 3" evidence="3">
    <location>
        <begin position="435"/>
        <end position="534"/>
    </location>
</feature>
<feature type="domain" description="Fibronectin type-III 4" evidence="3">
    <location>
        <begin position="538"/>
        <end position="629"/>
    </location>
</feature>
<feature type="domain" description="Fibronectin type-III 5" evidence="3">
    <location>
        <begin position="627"/>
        <end position="719"/>
    </location>
</feature>
<feature type="domain" description="Fibronectin type-III 6" evidence="3">
    <location>
        <begin position="724"/>
        <end position="833"/>
    </location>
</feature>
<feature type="region of interest" description="Disordered" evidence="4">
    <location>
        <begin position="983"/>
        <end position="1005"/>
    </location>
</feature>
<feature type="region of interest" description="Disordered" evidence="4">
    <location>
        <begin position="1066"/>
        <end position="1097"/>
    </location>
</feature>
<feature type="short sequence motif" description="WSXWS motif">
    <location>
        <begin position="519"/>
        <end position="523"/>
    </location>
</feature>
<feature type="short sequence motif" description="Box 1 motif">
    <location>
        <begin position="869"/>
        <end position="877"/>
    </location>
</feature>
<feature type="compositionally biased region" description="Polar residues" evidence="4">
    <location>
        <begin position="1086"/>
        <end position="1097"/>
    </location>
</feature>
<feature type="modified residue" description="Phosphoserine" evidence="9">
    <location>
        <position position="927"/>
    </location>
</feature>
<feature type="modified residue" description="Phosphoserine" evidence="1">
    <location>
        <position position="1044"/>
    </location>
</feature>
<feature type="glycosylation site" description="N-linked (GlcNAc...) asparagine" evidence="2">
    <location>
        <position position="64"/>
    </location>
</feature>
<feature type="glycosylation site" description="N-linked (GlcNAc...) asparagine" evidence="2">
    <location>
        <position position="85"/>
    </location>
</feature>
<feature type="glycosylation site" description="N-linked (GlcNAc...) asparagine" evidence="7">
    <location>
        <position position="131"/>
    </location>
</feature>
<feature type="glycosylation site" description="N-linked (GlcNAc...) asparagine" evidence="2">
    <location>
        <position position="143"/>
    </location>
</feature>
<feature type="glycosylation site" description="N-linked (GlcNAc...) asparagine" evidence="2">
    <location>
        <position position="191"/>
    </location>
</feature>
<feature type="glycosylation site" description="N-linked (GlcNAc...) asparagine" evidence="2">
    <location>
        <position position="243"/>
    </location>
</feature>
<feature type="glycosylation site" description="N-linked (GlcNAc...) asparagine" evidence="7">
    <location>
        <position position="303"/>
    </location>
</feature>
<feature type="glycosylation site" description="N-linked (GlcNAc...) asparagine" evidence="2">
    <location>
        <position position="390"/>
    </location>
</feature>
<feature type="glycosylation site" description="N-linked (GlcNAc...) asparagine" evidence="7">
    <location>
        <position position="407"/>
    </location>
</feature>
<feature type="glycosylation site" description="N-linked (GlcNAc...) asparagine" evidence="7">
    <location>
        <position position="426"/>
    </location>
</feature>
<feature type="glycosylation site" description="N-linked (GlcNAc...) asparagine" evidence="2">
    <location>
        <position position="445"/>
    </location>
</feature>
<feature type="glycosylation site" description="N-linked (GlcNAc...) asparagine" evidence="2">
    <location>
        <position position="481"/>
    </location>
</feature>
<feature type="glycosylation site" description="N-linked (GlcNAc...) asparagine" evidence="2">
    <location>
        <position position="489"/>
    </location>
</feature>
<feature type="glycosylation site" description="N-linked (GlcNAc...) asparagine" evidence="2">
    <location>
        <position position="572"/>
    </location>
</feature>
<feature type="glycosylation site" description="N-linked (GlcNAc...) asparagine" evidence="2">
    <location>
        <position position="652"/>
    </location>
</feature>
<feature type="glycosylation site" description="N-linked (GlcNAc...) asparagine" evidence="2">
    <location>
        <position position="663"/>
    </location>
</feature>
<feature type="glycosylation site" description="N-linked (GlcNAc...) asparagine" evidence="2">
    <location>
        <position position="680"/>
    </location>
</feature>
<feature type="glycosylation site" description="N-linked (GlcNAc...) asparagine" evidence="2">
    <location>
        <position position="729"/>
    </location>
</feature>
<feature type="glycosylation site" description="N-linked (GlcNAc...) asparagine" evidence="2">
    <location>
        <position position="787"/>
    </location>
</feature>
<feature type="disulfide bond" evidence="7">
    <location>
        <begin position="55"/>
        <end position="65"/>
    </location>
</feature>
<feature type="disulfide bond" evidence="7">
    <location>
        <begin position="82"/>
        <end position="90"/>
    </location>
</feature>
<feature type="disulfide bond" evidence="7">
    <location>
        <begin position="213"/>
        <end position="270"/>
    </location>
</feature>
<feature type="disulfide bond" evidence="7">
    <location>
        <begin position="341"/>
        <end position="351"/>
    </location>
</feature>
<feature type="disulfide bond" evidence="7">
    <location>
        <begin position="466"/>
        <end position="511"/>
    </location>
</feature>
<feature type="sequence variant" id="VAR_029109" description="In dbSNP:rs3729734.">
    <original>H</original>
    <variation>Y</variation>
    <location>
        <position position="116"/>
    </location>
</feature>
<feature type="sequence variant" id="VAR_025666" description="In STWS1." evidence="5">
    <original>S</original>
    <variation>P</variation>
    <location>
        <position position="279"/>
    </location>
</feature>
<feature type="sequence variant" id="VAR_029110" description="In dbSNP:rs3729740.">
    <original>D</original>
    <variation>N</variation>
    <location>
        <position position="578"/>
    </location>
</feature>
<feature type="sequence variant" id="VAR_021996" description="In dbSNP:rs2303743.">
    <original>I</original>
    <variation>M</variation>
    <location>
        <position position="633"/>
    </location>
</feature>
<feature type="sequence variant" id="VAR_038626" description="In dbSNP:rs3729744.">
    <original>S</original>
    <variation>L</variation>
    <location>
        <position position="664"/>
    </location>
</feature>
<feature type="sequence variant" id="VAR_029111" description="In dbSNP:rs3110234.">
    <original>V</original>
    <variation>I</variation>
    <location>
        <position position="785"/>
    </location>
</feature>
<feature type="sequence variant" id="VAR_036166" description="In a colorectal cancer sample; somatic mutation." evidence="6">
    <original>F</original>
    <variation>L</variation>
    <location>
        <position position="1068"/>
    </location>
</feature>
<feature type="strand" evidence="10">
    <location>
        <begin position="55"/>
        <end position="59"/>
    </location>
</feature>
<feature type="strand" evidence="10">
    <location>
        <begin position="62"/>
        <end position="66"/>
    </location>
</feature>
<feature type="strand" evidence="10">
    <location>
        <begin position="71"/>
        <end position="73"/>
    </location>
</feature>
<feature type="strand" evidence="10">
    <location>
        <begin position="79"/>
        <end position="83"/>
    </location>
</feature>
<feature type="strand" evidence="10">
    <location>
        <begin position="85"/>
        <end position="87"/>
    </location>
</feature>
<feature type="strand" evidence="10">
    <location>
        <begin position="89"/>
        <end position="97"/>
    </location>
</feature>
<feature type="strand" evidence="10">
    <location>
        <begin position="104"/>
        <end position="106"/>
    </location>
</feature>
<feature type="strand" evidence="10">
    <location>
        <begin position="110"/>
        <end position="113"/>
    </location>
</feature>
<feature type="strand" evidence="11">
    <location>
        <begin position="141"/>
        <end position="147"/>
    </location>
</feature>
<feature type="turn" evidence="11">
    <location>
        <begin position="148"/>
        <end position="151"/>
    </location>
</feature>
<feature type="strand" evidence="11">
    <location>
        <begin position="152"/>
        <end position="157"/>
    </location>
</feature>
<feature type="helix" evidence="11">
    <location>
        <begin position="161"/>
        <end position="163"/>
    </location>
</feature>
<feature type="strand" evidence="11">
    <location>
        <begin position="169"/>
        <end position="178"/>
    </location>
</feature>
<feature type="turn" evidence="11">
    <location>
        <begin position="179"/>
        <end position="181"/>
    </location>
</feature>
<feature type="strand" evidence="11">
    <location>
        <begin position="186"/>
        <end position="192"/>
    </location>
</feature>
<feature type="strand" evidence="11">
    <location>
        <begin position="194"/>
        <end position="196"/>
    </location>
</feature>
<feature type="strand" evidence="11">
    <location>
        <begin position="201"/>
        <end position="206"/>
    </location>
</feature>
<feature type="helix" evidence="11">
    <location>
        <begin position="211"/>
        <end position="213"/>
    </location>
</feature>
<feature type="strand" evidence="11">
    <location>
        <begin position="216"/>
        <end position="225"/>
    </location>
</feature>
<feature type="strand" evidence="11">
    <location>
        <begin position="231"/>
        <end position="233"/>
    </location>
</feature>
<feature type="strand" evidence="11">
    <location>
        <begin position="242"/>
        <end position="244"/>
    </location>
</feature>
<feature type="strand" evidence="10">
    <location>
        <begin position="254"/>
        <end position="256"/>
    </location>
</feature>
<feature type="strand" evidence="11">
    <location>
        <begin position="257"/>
        <end position="262"/>
    </location>
</feature>
<feature type="strand" evidence="11">
    <location>
        <begin position="267"/>
        <end position="271"/>
    </location>
</feature>
<feature type="strand" evidence="11">
    <location>
        <begin position="277"/>
        <end position="284"/>
    </location>
</feature>
<feature type="strand" evidence="11">
    <location>
        <begin position="293"/>
        <end position="295"/>
    </location>
</feature>
<feature type="strand" evidence="11">
    <location>
        <begin position="297"/>
        <end position="301"/>
    </location>
</feature>
<feature type="strand" evidence="11">
    <location>
        <begin position="312"/>
        <end position="320"/>
    </location>
</feature>
<feature type="strand" evidence="11">
    <location>
        <begin position="322"/>
        <end position="330"/>
    </location>
</feature>
<feature type="strand" evidence="11">
    <location>
        <begin position="337"/>
        <end position="345"/>
    </location>
</feature>
<feature type="strand" evidence="11">
    <location>
        <begin position="348"/>
        <end position="354"/>
    </location>
</feature>
<feature type="helix" evidence="10">
    <location>
        <begin position="363"/>
        <end position="365"/>
    </location>
</feature>
<feature type="strand" evidence="11">
    <location>
        <begin position="368"/>
        <end position="376"/>
    </location>
</feature>
<feature type="strand" evidence="11">
    <location>
        <begin position="379"/>
        <end position="381"/>
    </location>
</feature>
<feature type="strand" evidence="11">
    <location>
        <begin position="393"/>
        <end position="398"/>
    </location>
</feature>
<feature type="strand" evidence="11">
    <location>
        <begin position="405"/>
        <end position="413"/>
    </location>
</feature>
<feature type="strand" evidence="11">
    <location>
        <begin position="418"/>
        <end position="426"/>
    </location>
</feature>
<feature type="helix" evidence="11">
    <location>
        <begin position="427"/>
        <end position="429"/>
    </location>
</feature>
<feature type="strand" evidence="11">
    <location>
        <begin position="437"/>
        <end position="440"/>
    </location>
</feature>
<feature type="strand" evidence="11">
    <location>
        <begin position="445"/>
        <end position="448"/>
    </location>
</feature>
<feature type="strand" evidence="11">
    <location>
        <begin position="452"/>
        <end position="454"/>
    </location>
</feature>
<feature type="strand" evidence="11">
    <location>
        <begin position="460"/>
        <end position="462"/>
    </location>
</feature>
<feature type="strand" evidence="11">
    <location>
        <begin position="464"/>
        <end position="471"/>
    </location>
</feature>
<feature type="strand" evidence="11">
    <location>
        <begin position="473"/>
        <end position="475"/>
    </location>
</feature>
<feature type="strand" evidence="11">
    <location>
        <begin position="477"/>
        <end position="484"/>
    </location>
</feature>
<feature type="strand" evidence="11">
    <location>
        <begin position="489"/>
        <end position="491"/>
    </location>
</feature>
<feature type="strand" evidence="10">
    <location>
        <begin position="501"/>
        <end position="504"/>
    </location>
</feature>
<feature type="strand" evidence="10">
    <location>
        <begin position="506"/>
        <end position="510"/>
    </location>
</feature>
<feature type="strand" evidence="11">
    <location>
        <begin position="513"/>
        <end position="516"/>
    </location>
</feature>
<dbReference type="EMBL" id="X61615">
    <property type="protein sequence ID" value="CAA43805.1"/>
    <property type="molecule type" value="mRNA"/>
</dbReference>
<dbReference type="EMBL" id="U66563">
    <property type="protein sequence ID" value="AAB61897.1"/>
    <property type="molecule type" value="mRNA"/>
</dbReference>
<dbReference type="CCDS" id="CCDS3927.1">
    <molecule id="P42702-1"/>
</dbReference>
<dbReference type="PIR" id="S17308">
    <property type="entry name" value="S17308"/>
</dbReference>
<dbReference type="RefSeq" id="NP_001121143.1">
    <molecule id="P42702-1"/>
    <property type="nucleotide sequence ID" value="NM_001127671.2"/>
</dbReference>
<dbReference type="RefSeq" id="NP_001351226.1">
    <molecule id="P42702-1"/>
    <property type="nucleotide sequence ID" value="NM_001364297.2"/>
</dbReference>
<dbReference type="RefSeq" id="NP_002301.1">
    <molecule id="P42702-1"/>
    <property type="nucleotide sequence ID" value="NM_002310.6"/>
</dbReference>
<dbReference type="RefSeq" id="XP_011512342.1">
    <property type="nucleotide sequence ID" value="XM_011514040.2"/>
</dbReference>
<dbReference type="RefSeq" id="XP_011512344.1">
    <molecule id="P42702-1"/>
    <property type="nucleotide sequence ID" value="XM_011514042.4"/>
</dbReference>
<dbReference type="RefSeq" id="XP_016864952.1">
    <molecule id="P42702-1"/>
    <property type="nucleotide sequence ID" value="XM_017009463.2"/>
</dbReference>
<dbReference type="PDB" id="3E0G">
    <property type="method" value="X-ray"/>
    <property type="resolution" value="3.10 A"/>
    <property type="chains" value="A=52-534"/>
</dbReference>
<dbReference type="PDB" id="8D6A">
    <property type="method" value="EM"/>
    <property type="resolution" value="3.54 A"/>
    <property type="chains" value="B=45-833"/>
</dbReference>
<dbReference type="PDB" id="8D74">
    <property type="method" value="EM"/>
    <property type="resolution" value="3.03 A"/>
    <property type="chains" value="B=45-833"/>
</dbReference>
<dbReference type="PDB" id="8D7R">
    <property type="method" value="EM"/>
    <property type="resolution" value="3.90 A"/>
    <property type="chains" value="B=45-833"/>
</dbReference>
<dbReference type="PDB" id="8V29">
    <property type="method" value="EM"/>
    <property type="resolution" value="3.99 A"/>
    <property type="chains" value="C=45-833"/>
</dbReference>
<dbReference type="PDB" id="8V2A">
    <property type="method" value="EM"/>
    <property type="resolution" value="3.59 A"/>
    <property type="chains" value="C=45-833"/>
</dbReference>
<dbReference type="PDBsum" id="3E0G"/>
<dbReference type="PDBsum" id="8D6A"/>
<dbReference type="PDBsum" id="8D74"/>
<dbReference type="PDBsum" id="8D7R"/>
<dbReference type="PDBsum" id="8V29"/>
<dbReference type="PDBsum" id="8V2A"/>
<dbReference type="EMDB" id="EMD-27221"/>
<dbReference type="EMDB" id="EMD-27227"/>
<dbReference type="EMDB" id="EMD-27229"/>
<dbReference type="EMDB" id="EMD-27231"/>
<dbReference type="EMDB" id="EMD-42902"/>
<dbReference type="EMDB" id="EMD-42903"/>
<dbReference type="SMR" id="P42702"/>
<dbReference type="BioGRID" id="110165">
    <property type="interactions" value="41"/>
</dbReference>
<dbReference type="CORUM" id="P42702"/>
<dbReference type="DIP" id="DIP-5770N"/>
<dbReference type="FunCoup" id="P42702">
    <property type="interactions" value="741"/>
</dbReference>
<dbReference type="IntAct" id="P42702">
    <property type="interactions" value="23"/>
</dbReference>
<dbReference type="MINT" id="P42702"/>
<dbReference type="STRING" id="9606.ENSP00000398368"/>
<dbReference type="GlyCosmos" id="P42702">
    <property type="glycosylation" value="19 sites, No reported glycans"/>
</dbReference>
<dbReference type="GlyGen" id="P42702">
    <property type="glycosylation" value="23 sites, 10 N-linked glycans (11 sites), 2 O-linked glycans (3 sites)"/>
</dbReference>
<dbReference type="iPTMnet" id="P42702"/>
<dbReference type="PhosphoSitePlus" id="P42702"/>
<dbReference type="SwissPalm" id="P42702"/>
<dbReference type="BioMuta" id="LIFR"/>
<dbReference type="DMDM" id="1170784"/>
<dbReference type="jPOST" id="P42702"/>
<dbReference type="MassIVE" id="P42702"/>
<dbReference type="PaxDb" id="9606-ENSP00000263409"/>
<dbReference type="PeptideAtlas" id="P42702"/>
<dbReference type="ProteomicsDB" id="55546">
    <molecule id="P42702-1"/>
</dbReference>
<dbReference type="Pumba" id="P42702"/>
<dbReference type="Antibodypedia" id="4137">
    <property type="antibodies" value="459 antibodies from 31 providers"/>
</dbReference>
<dbReference type="DNASU" id="3977"/>
<dbReference type="Ensembl" id="ENST00000263409.8">
    <molecule id="P42702-1"/>
    <property type="protein sequence ID" value="ENSP00000263409.4"/>
    <property type="gene ID" value="ENSG00000113594.10"/>
</dbReference>
<dbReference type="Ensembl" id="ENST00000453190.7">
    <molecule id="P42702-1"/>
    <property type="protein sequence ID" value="ENSP00000398368.2"/>
    <property type="gene ID" value="ENSG00000113594.10"/>
</dbReference>
<dbReference type="GeneID" id="3977"/>
<dbReference type="KEGG" id="hsa:3977"/>
<dbReference type="MANE-Select" id="ENST00000453190.7">
    <property type="protein sequence ID" value="ENSP00000398368.2"/>
    <property type="RefSeq nucleotide sequence ID" value="NM_001127671.2"/>
    <property type="RefSeq protein sequence ID" value="NP_001121143.1"/>
</dbReference>
<dbReference type="UCSC" id="uc003jli.3">
    <molecule id="P42702-1"/>
    <property type="organism name" value="human"/>
</dbReference>
<dbReference type="AGR" id="HGNC:6597"/>
<dbReference type="CTD" id="3977"/>
<dbReference type="DisGeNET" id="3977"/>
<dbReference type="GeneCards" id="LIFR"/>
<dbReference type="HGNC" id="HGNC:6597">
    <property type="gene designation" value="LIFR"/>
</dbReference>
<dbReference type="HPA" id="ENSG00000113594">
    <property type="expression patterns" value="Low tissue specificity"/>
</dbReference>
<dbReference type="MalaCards" id="LIFR"/>
<dbReference type="MIM" id="151443">
    <property type="type" value="gene"/>
</dbReference>
<dbReference type="MIM" id="601559">
    <property type="type" value="phenotype"/>
</dbReference>
<dbReference type="neXtProt" id="NX_P42702"/>
<dbReference type="OpenTargets" id="ENSG00000113594"/>
<dbReference type="Orphanet" id="3206">
    <property type="disease" value="Stueve-Wiedemann syndrome"/>
</dbReference>
<dbReference type="PharmGKB" id="PA30371"/>
<dbReference type="VEuPathDB" id="HostDB:ENSG00000113594"/>
<dbReference type="eggNOG" id="ENOG502QQF6">
    <property type="taxonomic scope" value="Eukaryota"/>
</dbReference>
<dbReference type="GeneTree" id="ENSGT00940000155776"/>
<dbReference type="HOGENOM" id="CLU_283805_0_0_1"/>
<dbReference type="InParanoid" id="P42702"/>
<dbReference type="OMA" id="FFLYGCK"/>
<dbReference type="OrthoDB" id="6382334at2759"/>
<dbReference type="PAN-GO" id="P42702">
    <property type="GO annotations" value="8 GO annotations based on evolutionary models"/>
</dbReference>
<dbReference type="PhylomeDB" id="P42702"/>
<dbReference type="TreeFam" id="TF338122"/>
<dbReference type="PathwayCommons" id="P42702"/>
<dbReference type="Reactome" id="R-HSA-6788467">
    <property type="pathway name" value="IL-6-type cytokine receptor ligand interactions"/>
</dbReference>
<dbReference type="Reactome" id="R-HSA-8939247">
    <property type="pathway name" value="RUNX1 regulates transcription of genes involved in interleukin signaling"/>
</dbReference>
<dbReference type="SignaLink" id="P42702"/>
<dbReference type="SIGNOR" id="P42702"/>
<dbReference type="BioGRID-ORCS" id="3977">
    <property type="hits" value="17 hits in 1164 CRISPR screens"/>
</dbReference>
<dbReference type="ChiTaRS" id="LIFR">
    <property type="organism name" value="human"/>
</dbReference>
<dbReference type="EvolutionaryTrace" id="P42702"/>
<dbReference type="GeneWiki" id="Leukemia_inhibitory_factor_receptor"/>
<dbReference type="GenomeRNAi" id="3977"/>
<dbReference type="Pharos" id="P42702">
    <property type="development level" value="Tbio"/>
</dbReference>
<dbReference type="PRO" id="PR:P42702"/>
<dbReference type="Proteomes" id="UP000005640">
    <property type="component" value="Chromosome 5"/>
</dbReference>
<dbReference type="RNAct" id="P42702">
    <property type="molecule type" value="protein"/>
</dbReference>
<dbReference type="Bgee" id="ENSG00000113594">
    <property type="expression patterns" value="Expressed in medial globus pallidus and 188 other cell types or tissues"/>
</dbReference>
<dbReference type="ExpressionAtlas" id="P42702">
    <property type="expression patterns" value="baseline and differential"/>
</dbReference>
<dbReference type="GO" id="GO:0009897">
    <property type="term" value="C:external side of plasma membrane"/>
    <property type="evidence" value="ECO:0000318"/>
    <property type="project" value="GO_Central"/>
</dbReference>
<dbReference type="GO" id="GO:0070062">
    <property type="term" value="C:extracellular exosome"/>
    <property type="evidence" value="ECO:0007005"/>
    <property type="project" value="UniProtKB"/>
</dbReference>
<dbReference type="GO" id="GO:0005886">
    <property type="term" value="C:plasma membrane"/>
    <property type="evidence" value="ECO:0000304"/>
    <property type="project" value="Reactome"/>
</dbReference>
<dbReference type="GO" id="GO:0043235">
    <property type="term" value="C:receptor complex"/>
    <property type="evidence" value="ECO:0000314"/>
    <property type="project" value="BHF-UCL"/>
</dbReference>
<dbReference type="GO" id="GO:0005127">
    <property type="term" value="F:ciliary neurotrophic factor receptor binding"/>
    <property type="evidence" value="ECO:0000353"/>
    <property type="project" value="BHF-UCL"/>
</dbReference>
<dbReference type="GO" id="GO:0019955">
    <property type="term" value="F:cytokine binding"/>
    <property type="evidence" value="ECO:0000318"/>
    <property type="project" value="GO_Central"/>
</dbReference>
<dbReference type="GO" id="GO:0004896">
    <property type="term" value="F:cytokine receptor activity"/>
    <property type="evidence" value="ECO:0000318"/>
    <property type="project" value="GO_Central"/>
</dbReference>
<dbReference type="GO" id="GO:0019838">
    <property type="term" value="F:growth factor binding"/>
    <property type="evidence" value="ECO:0000353"/>
    <property type="project" value="BHF-UCL"/>
</dbReference>
<dbReference type="GO" id="GO:0004923">
    <property type="term" value="F:leukemia inhibitory factor receptor activity"/>
    <property type="evidence" value="ECO:0000314"/>
    <property type="project" value="MGI"/>
</dbReference>
<dbReference type="GO" id="GO:0007166">
    <property type="term" value="P:cell surface receptor signaling pathway"/>
    <property type="evidence" value="ECO:0000304"/>
    <property type="project" value="ProtInc"/>
</dbReference>
<dbReference type="GO" id="GO:0070120">
    <property type="term" value="P:ciliary neurotrophic factor-mediated signaling pathway"/>
    <property type="evidence" value="ECO:0000314"/>
    <property type="project" value="BHF-UCL"/>
</dbReference>
<dbReference type="GO" id="GO:0019221">
    <property type="term" value="P:cytokine-mediated signaling pathway"/>
    <property type="evidence" value="ECO:0000314"/>
    <property type="project" value="MGI"/>
</dbReference>
<dbReference type="GO" id="GO:0048861">
    <property type="term" value="P:leukemia inhibitory factor signaling pathway"/>
    <property type="evidence" value="ECO:0000314"/>
    <property type="project" value="BHF-UCL"/>
</dbReference>
<dbReference type="GO" id="GO:0038165">
    <property type="term" value="P:oncostatin-M-mediated signaling pathway"/>
    <property type="evidence" value="ECO:0000315"/>
    <property type="project" value="BHF-UCL"/>
</dbReference>
<dbReference type="GO" id="GO:0008284">
    <property type="term" value="P:positive regulation of cell population proliferation"/>
    <property type="evidence" value="ECO:0000314"/>
    <property type="project" value="MGI"/>
</dbReference>
<dbReference type="GO" id="GO:0034097">
    <property type="term" value="P:response to cytokine"/>
    <property type="evidence" value="ECO:0000314"/>
    <property type="project" value="BHF-UCL"/>
</dbReference>
<dbReference type="CDD" id="cd00063">
    <property type="entry name" value="FN3"/>
    <property type="match status" value="3"/>
</dbReference>
<dbReference type="FunFam" id="2.60.40.10:FF:000578">
    <property type="entry name" value="Leukemia inhibitory factor receptor"/>
    <property type="match status" value="1"/>
</dbReference>
<dbReference type="FunFam" id="2.60.40.10:FF:000607">
    <property type="entry name" value="Leukemia inhibitory factor receptor"/>
    <property type="match status" value="1"/>
</dbReference>
<dbReference type="FunFam" id="2.60.40.10:FF:000657">
    <property type="entry name" value="Leukemia inhibitory factor receptor"/>
    <property type="match status" value="1"/>
</dbReference>
<dbReference type="FunFam" id="2.60.40.10:FF:000738">
    <property type="entry name" value="Leukemia inhibitory factor receptor"/>
    <property type="match status" value="1"/>
</dbReference>
<dbReference type="FunFam" id="2.60.40.10:FF:000808">
    <property type="entry name" value="Leukemia inhibitory factor receptor"/>
    <property type="match status" value="1"/>
</dbReference>
<dbReference type="FunFam" id="2.60.40.10:FF:001265">
    <property type="entry name" value="Leukemia inhibitory factor receptor"/>
    <property type="match status" value="1"/>
</dbReference>
<dbReference type="FunFam" id="2.60.40.10:FF:001011">
    <property type="entry name" value="leukemia inhibitory factor receptor"/>
    <property type="match status" value="1"/>
</dbReference>
<dbReference type="FunFam" id="2.60.40.10:FF:001124">
    <property type="entry name" value="leukemia inhibitory factor receptor"/>
    <property type="match status" value="1"/>
</dbReference>
<dbReference type="Gene3D" id="2.60.40.10">
    <property type="entry name" value="Immunoglobulins"/>
    <property type="match status" value="8"/>
</dbReference>
<dbReference type="InterPro" id="IPR003961">
    <property type="entry name" value="FN3_dom"/>
</dbReference>
<dbReference type="InterPro" id="IPR036116">
    <property type="entry name" value="FN3_sf"/>
</dbReference>
<dbReference type="InterPro" id="IPR003529">
    <property type="entry name" value="Hematopoietin_rcpt_Gp130_CS"/>
</dbReference>
<dbReference type="InterPro" id="IPR013783">
    <property type="entry name" value="Ig-like_fold"/>
</dbReference>
<dbReference type="InterPro" id="IPR048497">
    <property type="entry name" value="LIF-R-like_Ig-like"/>
</dbReference>
<dbReference type="InterPro" id="IPR040817">
    <property type="entry name" value="LIFR_D2"/>
</dbReference>
<dbReference type="InterPro" id="IPR040901">
    <property type="entry name" value="LIFR_N"/>
</dbReference>
<dbReference type="InterPro" id="IPR050379">
    <property type="entry name" value="Type-I_Cytokine_Rcpt"/>
</dbReference>
<dbReference type="PANTHER" id="PTHR23036">
    <property type="entry name" value="CYTOKINE RECEPTOR"/>
    <property type="match status" value="1"/>
</dbReference>
<dbReference type="PANTHER" id="PTHR23036:SF105">
    <property type="entry name" value="LEUKEMIA INHIBITORY FACTOR RECEPTOR"/>
    <property type="match status" value="1"/>
</dbReference>
<dbReference type="Pfam" id="PF00041">
    <property type="entry name" value="fn3"/>
    <property type="match status" value="1"/>
</dbReference>
<dbReference type="Pfam" id="PF21177">
    <property type="entry name" value="LIF-R_Ig-like"/>
    <property type="match status" value="1"/>
</dbReference>
<dbReference type="Pfam" id="PF17971">
    <property type="entry name" value="LIFR_D2"/>
    <property type="match status" value="1"/>
</dbReference>
<dbReference type="Pfam" id="PF18207">
    <property type="entry name" value="LIFR_N"/>
    <property type="match status" value="1"/>
</dbReference>
<dbReference type="SMART" id="SM00060">
    <property type="entry name" value="FN3"/>
    <property type="match status" value="5"/>
</dbReference>
<dbReference type="SUPFAM" id="SSF49265">
    <property type="entry name" value="Fibronectin type III"/>
    <property type="match status" value="4"/>
</dbReference>
<dbReference type="PROSITE" id="PS50853">
    <property type="entry name" value="FN3"/>
    <property type="match status" value="5"/>
</dbReference>
<dbReference type="PROSITE" id="PS01353">
    <property type="entry name" value="HEMATOPO_REC_L_F2"/>
    <property type="match status" value="1"/>
</dbReference>
<gene>
    <name type="primary">LIFR</name>
</gene>
<comment type="function">
    <text>Signal-transducing molecule. May have a common pathway with IL6ST. The soluble form inhibits the biological activity of LIF by blocking its binding to receptors on target cells.</text>
</comment>
<comment type="subunit">
    <text evidence="7">Heterodimer composed of LIFR and IL6ST. The heterodimer formed by LIFR and IL6ST interacts with the complex formed by CNTF and CNTFR.</text>
</comment>
<comment type="interaction">
    <interactant intactId="EBI-7702162">
        <id>P42702</id>
    </interactant>
    <interactant intactId="EBI-1050897">
        <id>P26441</id>
        <label>CNTF</label>
    </interactant>
    <organismsDiffer>false</organismsDiffer>
    <experiments>9</experiments>
</comment>
<comment type="interaction">
    <interactant intactId="EBI-7702162">
        <id>P42702</id>
    </interactant>
    <interactant intactId="EBI-1057058">
        <id>Q99523</id>
        <label>SORT1</label>
    </interactant>
    <organismsDiffer>false</organismsDiffer>
    <experiments>3</experiments>
</comment>
<comment type="subcellular location">
    <molecule>Isoform 1</molecule>
    <subcellularLocation>
        <location>Cell membrane</location>
        <topology>Single-pass type I membrane protein</topology>
    </subcellularLocation>
</comment>
<comment type="subcellular location">
    <molecule>Isoform 2</molecule>
    <subcellularLocation>
        <location>Secreted</location>
    </subcellularLocation>
</comment>
<comment type="alternative products">
    <event type="alternative splicing"/>
    <isoform>
        <id>P42702-1</id>
        <name>1</name>
        <name>Membrane</name>
        <sequence type="displayed"/>
    </isoform>
    <isoform>
        <id>P42702-2</id>
        <name>2</name>
        <name>Secreted</name>
        <sequence type="not described"/>
    </isoform>
</comment>
<comment type="domain">
    <text>The WSXWS motif appears to be necessary for proper protein folding and thereby efficient intracellular transport and cell-surface receptor binding.</text>
</comment>
<comment type="domain">
    <text>The box 1 motif is required for JAK interaction and/or activation.</text>
</comment>
<comment type="disease" evidence="5">
    <disease id="DI-02344">
        <name>Stuve-Wiedemann syndrome 1</name>
        <acronym>STWS1</acronym>
        <description>A form of Stuve-Wiedemann syndrome, an autosomal recessive disease characterized by bowing of tubular bones and other skeletal and craniofacial abnormalities, respiratory distress, feeding difficulties, and hyperthermic episodes. Most patients do not survive past infancy.</description>
        <dbReference type="MIM" id="601559"/>
    </disease>
    <text>The disease is caused by variants affecting the gene represented in this entry.</text>
</comment>
<comment type="disease">
    <text>A chromosomal aberration involving LIFR is found in salivary gland pleiomorphic adenomas, the most common benign epithelial tumors of the salivary gland. Translocation t(5;8)(p13;q12) with PLAG1.</text>
</comment>
<comment type="similarity">
    <text evidence="8">Belongs to the type I cytokine receptor family. Type 2 subfamily.</text>
</comment>
<comment type="online information" name="Atlas of Genetics and Cytogenetics in Oncology and Haematology">
    <link uri="https://atlasgeneticsoncology.org/gene/410/LIFR"/>
</comment>
<proteinExistence type="evidence at protein level"/>